<reference key="1">
    <citation type="journal article" date="2002" name="Proc. Natl. Acad. Sci. U.S.A.">
        <title>Genome sequence of a serotype M3 strain of group A Streptococcus: phage-encoded toxins, the high-virulence phenotype, and clone emergence.</title>
        <authorList>
            <person name="Beres S.B."/>
            <person name="Sylva G.L."/>
            <person name="Barbian K.D."/>
            <person name="Lei B."/>
            <person name="Hoff J.S."/>
            <person name="Mammarella N.D."/>
            <person name="Liu M.-Y."/>
            <person name="Smoot J.C."/>
            <person name="Porcella S.F."/>
            <person name="Parkins L.D."/>
            <person name="Campbell D.S."/>
            <person name="Smith T.M."/>
            <person name="McCormick J.K."/>
            <person name="Leung D.Y.M."/>
            <person name="Schlievert P.M."/>
            <person name="Musser J.M."/>
        </authorList>
    </citation>
    <scope>NUCLEOTIDE SEQUENCE [LARGE SCALE GENOMIC DNA]</scope>
    <source>
        <strain>ATCC BAA-595 / MGAS315</strain>
    </source>
</reference>
<name>Y740_STRP3</name>
<accession>P0DH04</accession>
<accession>Q79XB0</accession>
<accession>Q8K7M5</accession>
<keyword id="KW-1003">Cell membrane</keyword>
<keyword id="KW-0472">Membrane</keyword>
<keyword id="KW-0812">Transmembrane</keyword>
<keyword id="KW-1133">Transmembrane helix</keyword>
<evidence type="ECO:0000255" key="1"/>
<evidence type="ECO:0000305" key="2"/>
<proteinExistence type="inferred from homology"/>
<feature type="chain" id="PRO_0000157465" description="UPF0324 membrane protein SpyM3_0740">
    <location>
        <begin position="1"/>
        <end position="339"/>
    </location>
</feature>
<feature type="transmembrane region" description="Helical" evidence="1">
    <location>
        <begin position="7"/>
        <end position="24"/>
    </location>
</feature>
<feature type="transmembrane region" description="Helical" evidence="1">
    <location>
        <begin position="28"/>
        <end position="50"/>
    </location>
</feature>
<feature type="transmembrane region" description="Helical" evidence="1">
    <location>
        <begin position="57"/>
        <end position="79"/>
    </location>
</feature>
<feature type="transmembrane region" description="Helical" evidence="1">
    <location>
        <begin position="84"/>
        <end position="106"/>
    </location>
</feature>
<feature type="transmembrane region" description="Helical" evidence="1">
    <location>
        <begin position="118"/>
        <end position="140"/>
    </location>
</feature>
<feature type="transmembrane region" description="Helical" evidence="1">
    <location>
        <begin position="150"/>
        <end position="172"/>
    </location>
</feature>
<feature type="transmembrane region" description="Helical" evidence="1">
    <location>
        <begin position="256"/>
        <end position="275"/>
    </location>
</feature>
<feature type="transmembrane region" description="Helical" evidence="1">
    <location>
        <begin position="290"/>
        <end position="307"/>
    </location>
</feature>
<feature type="transmembrane region" description="Helical" evidence="1">
    <location>
        <begin position="314"/>
        <end position="336"/>
    </location>
</feature>
<dbReference type="EMBL" id="AE014074">
    <property type="protein sequence ID" value="AAM79347.1"/>
    <property type="molecule type" value="Genomic_DNA"/>
</dbReference>
<dbReference type="RefSeq" id="WP_011054454.1">
    <property type="nucleotide sequence ID" value="NC_004070.1"/>
</dbReference>
<dbReference type="KEGG" id="spg:SpyM3_0740"/>
<dbReference type="HOGENOM" id="CLU_033541_2_1_9"/>
<dbReference type="Proteomes" id="UP000000564">
    <property type="component" value="Chromosome"/>
</dbReference>
<dbReference type="GO" id="GO:0005886">
    <property type="term" value="C:plasma membrane"/>
    <property type="evidence" value="ECO:0007669"/>
    <property type="project" value="UniProtKB-SubCell"/>
</dbReference>
<dbReference type="InterPro" id="IPR018383">
    <property type="entry name" value="UPF0324_pro"/>
</dbReference>
<dbReference type="PANTHER" id="PTHR30106">
    <property type="entry name" value="INNER MEMBRANE PROTEIN YEIH-RELATED"/>
    <property type="match status" value="1"/>
</dbReference>
<dbReference type="PANTHER" id="PTHR30106:SF1">
    <property type="entry name" value="UPF0324 MEMBRANE PROTEIN FN0533"/>
    <property type="match status" value="1"/>
</dbReference>
<dbReference type="Pfam" id="PF03601">
    <property type="entry name" value="Cons_hypoth698"/>
    <property type="match status" value="1"/>
</dbReference>
<sequence length="339" mass="36275">MSTHLRKLPGLLLCLLLALPAWYLGRLFPIIGAPVFAILLGMLLALFYHHRDKTKEGISFTSKYILQTAVVLLGFGLNLTQVMAVGMQSLPIIISTIATALLVAYGLQKWLRLDVNTATLVGIGSSICGGSAIAATAPVIKAKDDEVAKAISVIFLFNMLAALLFPSLGQLLGLSNEGFAIFAGTAVNDTSSVTATATAWDALHHSNTLDGATIVKLTRTLAILPITLGLSLYRAKKEHDIVTEENFSLRKSFPRFILFFLLASLITTLMTSLGVSADSFHSLKTLSKFFIVMAMAAIGLNTNLVKLIKTGGQAILLGSICWVAITLVSLAMQLSLGIW</sequence>
<gene>
    <name type="ordered locus">SpyM3_0740</name>
</gene>
<comment type="subcellular location">
    <subcellularLocation>
        <location evidence="2">Cell membrane</location>
        <topology evidence="2">Multi-pass membrane protein</topology>
    </subcellularLocation>
</comment>
<comment type="similarity">
    <text evidence="2">Belongs to the UPF0324 family.</text>
</comment>
<protein>
    <recommendedName>
        <fullName>UPF0324 membrane protein SpyM3_0740</fullName>
    </recommendedName>
</protein>
<organism>
    <name type="scientific">Streptococcus pyogenes serotype M3 (strain ATCC BAA-595 / MGAS315)</name>
    <dbReference type="NCBI Taxonomy" id="198466"/>
    <lineage>
        <taxon>Bacteria</taxon>
        <taxon>Bacillati</taxon>
        <taxon>Bacillota</taxon>
        <taxon>Bacilli</taxon>
        <taxon>Lactobacillales</taxon>
        <taxon>Streptococcaceae</taxon>
        <taxon>Streptococcus</taxon>
    </lineage>
</organism>